<protein>
    <recommendedName>
        <fullName>UvrABC system protein C</fullName>
        <shortName>Protein UvrC</shortName>
    </recommendedName>
    <alternativeName>
        <fullName>Excinuclease ABC subunit C</fullName>
    </alternativeName>
</protein>
<organism>
    <name type="scientific">Escherichia coli O157:H7</name>
    <dbReference type="NCBI Taxonomy" id="83334"/>
    <lineage>
        <taxon>Bacteria</taxon>
        <taxon>Pseudomonadati</taxon>
        <taxon>Pseudomonadota</taxon>
        <taxon>Gammaproteobacteria</taxon>
        <taxon>Enterobacterales</taxon>
        <taxon>Enterobacteriaceae</taxon>
        <taxon>Escherichia</taxon>
    </lineage>
</organism>
<comment type="function">
    <text evidence="1">The UvrABC repair system catalyzes the recognition and processing of DNA lesions. UvrC both incises the 5' and 3' sides of the lesion. The N-terminal half is responsible for the 3' incision and the C-terminal half is responsible for the 5' incision (By similarity).</text>
</comment>
<comment type="subunit">
    <text evidence="1">Interacts with UvrB in an incision complex.</text>
</comment>
<comment type="subcellular location">
    <subcellularLocation>
        <location evidence="1">Cytoplasm</location>
    </subcellularLocation>
</comment>
<comment type="similarity">
    <text evidence="2">Belongs to the UvrC family.</text>
</comment>
<comment type="sequence caution" evidence="2">
    <conflict type="erroneous initiation">
        <sequence resource="EMBL-CDS" id="AAG56928"/>
    </conflict>
    <text>Truncated N-terminus.</text>
</comment>
<sequence length="610" mass="68188">MSDQFDAKAFLKTVTSQPGVYRMYDAGGTVIYVGKAKDLKKRLSSYFRSNLASRKTEALVAQIQQIDVTVTHTETEALLLEHNYIKLYQPRYNVLLRDDKSYPFIFLSGDTHPRLAMHRGAKHAKGEYFGPFPNGYAVRETLALLQKIFPIRQCENSVYRNRSRPCLQYQIGRCLGPCVEGLVSEEEYAQQVEYVRLFLSGKDDQVLTQLISRMETASQNLEFEEAARIRDQIQAVRRVTEKQFVSNTGDDLDVIGVAFDAGMACVHVLFIRQGKVLGSRSYFPKVPGGTELSEVVETFVGQFYLQGSQMRTLPGEILLDFNLSDKTLLADSLSELAGRKINVQTKPRGDRARYLKLARTNAATALTSKLSQQSTVHQRLTALASVLKLPEVKRMECFDISHTMGEQTVASCVVFDANGPLRAEYRRYNITGITPGDDYAAMNQVLRRRYGKAIDDSKIPDVILIDGGKGQLAQAKNVFAELDVSWDKNHPLLLGVAKGADRKAGLETLFFEPEGEGFSLPPDSPALHVIQHIRDESHDHAIGGHRKKRAKVKNTSSLETIEGVGPKRRQMLLKYMGGLQGLRNASVEEIAKVPGISQGLAEKIFWSLKH</sequence>
<proteinExistence type="inferred from homology"/>
<dbReference type="EMBL" id="AE005174">
    <property type="protein sequence ID" value="AAG56928.1"/>
    <property type="status" value="ALT_INIT"/>
    <property type="molecule type" value="Genomic_DNA"/>
</dbReference>
<dbReference type="EMBL" id="BA000007">
    <property type="protein sequence ID" value="BAB36074.2"/>
    <property type="molecule type" value="Genomic_DNA"/>
</dbReference>
<dbReference type="RefSeq" id="NP_310678.2">
    <property type="nucleotide sequence ID" value="NC_002695.1"/>
</dbReference>
<dbReference type="RefSeq" id="WP_001283421.1">
    <property type="nucleotide sequence ID" value="NZ_VOAI01000028.1"/>
</dbReference>
<dbReference type="SMR" id="P0A8G2"/>
<dbReference type="STRING" id="155864.Z3001"/>
<dbReference type="GeneID" id="913874"/>
<dbReference type="GeneID" id="93776218"/>
<dbReference type="KEGG" id="ece:Z3001"/>
<dbReference type="KEGG" id="ecs:ECs_2651"/>
<dbReference type="PATRIC" id="fig|386585.9.peg.2776"/>
<dbReference type="eggNOG" id="COG0322">
    <property type="taxonomic scope" value="Bacteria"/>
</dbReference>
<dbReference type="HOGENOM" id="CLU_014841_3_2_6"/>
<dbReference type="OMA" id="HIECFDN"/>
<dbReference type="Proteomes" id="UP000000558">
    <property type="component" value="Chromosome"/>
</dbReference>
<dbReference type="Proteomes" id="UP000002519">
    <property type="component" value="Chromosome"/>
</dbReference>
<dbReference type="GO" id="GO:0005737">
    <property type="term" value="C:cytoplasm"/>
    <property type="evidence" value="ECO:0007669"/>
    <property type="project" value="UniProtKB-SubCell"/>
</dbReference>
<dbReference type="GO" id="GO:0009380">
    <property type="term" value="C:excinuclease repair complex"/>
    <property type="evidence" value="ECO:0007669"/>
    <property type="project" value="InterPro"/>
</dbReference>
<dbReference type="GO" id="GO:0003677">
    <property type="term" value="F:DNA binding"/>
    <property type="evidence" value="ECO:0007669"/>
    <property type="project" value="UniProtKB-UniRule"/>
</dbReference>
<dbReference type="GO" id="GO:0009381">
    <property type="term" value="F:excinuclease ABC activity"/>
    <property type="evidence" value="ECO:0007669"/>
    <property type="project" value="UniProtKB-UniRule"/>
</dbReference>
<dbReference type="GO" id="GO:0006289">
    <property type="term" value="P:nucleotide-excision repair"/>
    <property type="evidence" value="ECO:0007669"/>
    <property type="project" value="UniProtKB-UniRule"/>
</dbReference>
<dbReference type="GO" id="GO:0009432">
    <property type="term" value="P:SOS response"/>
    <property type="evidence" value="ECO:0007669"/>
    <property type="project" value="UniProtKB-UniRule"/>
</dbReference>
<dbReference type="CDD" id="cd10434">
    <property type="entry name" value="GIY-YIG_UvrC_Cho"/>
    <property type="match status" value="1"/>
</dbReference>
<dbReference type="FunFam" id="1.10.150.20:FF:000005">
    <property type="entry name" value="UvrABC system protein C"/>
    <property type="match status" value="1"/>
</dbReference>
<dbReference type="FunFam" id="3.30.420.340:FF:000001">
    <property type="entry name" value="UvrABC system protein C"/>
    <property type="match status" value="1"/>
</dbReference>
<dbReference type="FunFam" id="3.40.1440.10:FF:000001">
    <property type="entry name" value="UvrABC system protein C"/>
    <property type="match status" value="1"/>
</dbReference>
<dbReference type="FunFam" id="4.10.860.10:FF:000002">
    <property type="entry name" value="UvrABC system protein C"/>
    <property type="match status" value="1"/>
</dbReference>
<dbReference type="Gene3D" id="1.10.150.20">
    <property type="entry name" value="5' to 3' exonuclease, C-terminal subdomain"/>
    <property type="match status" value="1"/>
</dbReference>
<dbReference type="Gene3D" id="3.40.1440.10">
    <property type="entry name" value="GIY-YIG endonuclease"/>
    <property type="match status" value="1"/>
</dbReference>
<dbReference type="Gene3D" id="4.10.860.10">
    <property type="entry name" value="UVR domain"/>
    <property type="match status" value="1"/>
</dbReference>
<dbReference type="Gene3D" id="3.30.420.340">
    <property type="entry name" value="UvrC, RNAse H endonuclease domain"/>
    <property type="match status" value="1"/>
</dbReference>
<dbReference type="HAMAP" id="MF_00203">
    <property type="entry name" value="UvrC"/>
    <property type="match status" value="1"/>
</dbReference>
<dbReference type="InterPro" id="IPR000305">
    <property type="entry name" value="GIY-YIG_endonuc"/>
</dbReference>
<dbReference type="InterPro" id="IPR035901">
    <property type="entry name" value="GIY-YIG_endonuc_sf"/>
</dbReference>
<dbReference type="InterPro" id="IPR047296">
    <property type="entry name" value="GIY-YIG_UvrC_Cho"/>
</dbReference>
<dbReference type="InterPro" id="IPR003583">
    <property type="entry name" value="Hlx-hairpin-Hlx_DNA-bd_motif"/>
</dbReference>
<dbReference type="InterPro" id="IPR010994">
    <property type="entry name" value="RuvA_2-like"/>
</dbReference>
<dbReference type="InterPro" id="IPR001943">
    <property type="entry name" value="UVR_dom"/>
</dbReference>
<dbReference type="InterPro" id="IPR036876">
    <property type="entry name" value="UVR_dom_sf"/>
</dbReference>
<dbReference type="InterPro" id="IPR050066">
    <property type="entry name" value="UvrABC_protein_C"/>
</dbReference>
<dbReference type="InterPro" id="IPR004791">
    <property type="entry name" value="UvrC"/>
</dbReference>
<dbReference type="InterPro" id="IPR001162">
    <property type="entry name" value="UvrC_RNase_H_dom"/>
</dbReference>
<dbReference type="InterPro" id="IPR038476">
    <property type="entry name" value="UvrC_RNase_H_dom_sf"/>
</dbReference>
<dbReference type="NCBIfam" id="NF001824">
    <property type="entry name" value="PRK00558.1-5"/>
    <property type="match status" value="1"/>
</dbReference>
<dbReference type="NCBIfam" id="TIGR00194">
    <property type="entry name" value="uvrC"/>
    <property type="match status" value="1"/>
</dbReference>
<dbReference type="PANTHER" id="PTHR30562:SF1">
    <property type="entry name" value="UVRABC SYSTEM PROTEIN C"/>
    <property type="match status" value="1"/>
</dbReference>
<dbReference type="PANTHER" id="PTHR30562">
    <property type="entry name" value="UVRC/OXIDOREDUCTASE"/>
    <property type="match status" value="1"/>
</dbReference>
<dbReference type="Pfam" id="PF01541">
    <property type="entry name" value="GIY-YIG"/>
    <property type="match status" value="1"/>
</dbReference>
<dbReference type="Pfam" id="PF14520">
    <property type="entry name" value="HHH_5"/>
    <property type="match status" value="1"/>
</dbReference>
<dbReference type="Pfam" id="PF02151">
    <property type="entry name" value="UVR"/>
    <property type="match status" value="1"/>
</dbReference>
<dbReference type="Pfam" id="PF22920">
    <property type="entry name" value="UvrC_RNaseH"/>
    <property type="match status" value="1"/>
</dbReference>
<dbReference type="Pfam" id="PF08459">
    <property type="entry name" value="UvrC_RNaseH_dom"/>
    <property type="match status" value="1"/>
</dbReference>
<dbReference type="SMART" id="SM00465">
    <property type="entry name" value="GIYc"/>
    <property type="match status" value="1"/>
</dbReference>
<dbReference type="SMART" id="SM00278">
    <property type="entry name" value="HhH1"/>
    <property type="match status" value="2"/>
</dbReference>
<dbReference type="SUPFAM" id="SSF46600">
    <property type="entry name" value="C-terminal UvrC-binding domain of UvrB"/>
    <property type="match status" value="1"/>
</dbReference>
<dbReference type="SUPFAM" id="SSF82771">
    <property type="entry name" value="GIY-YIG endonuclease"/>
    <property type="match status" value="1"/>
</dbReference>
<dbReference type="SUPFAM" id="SSF47781">
    <property type="entry name" value="RuvA domain 2-like"/>
    <property type="match status" value="1"/>
</dbReference>
<dbReference type="PROSITE" id="PS50164">
    <property type="entry name" value="GIY_YIG"/>
    <property type="match status" value="1"/>
</dbReference>
<dbReference type="PROSITE" id="PS50151">
    <property type="entry name" value="UVR"/>
    <property type="match status" value="1"/>
</dbReference>
<dbReference type="PROSITE" id="PS50165">
    <property type="entry name" value="UVRC"/>
    <property type="match status" value="1"/>
</dbReference>
<feature type="chain" id="PRO_0000138301" description="UvrABC system protein C">
    <location>
        <begin position="1"/>
        <end position="610"/>
    </location>
</feature>
<feature type="domain" description="GIY-YIG">
    <location>
        <begin position="16"/>
        <end position="94"/>
    </location>
</feature>
<feature type="domain" description="UVR">
    <location>
        <begin position="204"/>
        <end position="239"/>
    </location>
</feature>
<gene>
    <name type="primary">uvrC</name>
    <name type="ordered locus">Z3001</name>
    <name type="ordered locus">ECs2651</name>
</gene>
<reference key="1">
    <citation type="journal article" date="2001" name="Nature">
        <title>Genome sequence of enterohaemorrhagic Escherichia coli O157:H7.</title>
        <authorList>
            <person name="Perna N.T."/>
            <person name="Plunkett G. III"/>
            <person name="Burland V."/>
            <person name="Mau B."/>
            <person name="Glasner J.D."/>
            <person name="Rose D.J."/>
            <person name="Mayhew G.F."/>
            <person name="Evans P.S."/>
            <person name="Gregor J."/>
            <person name="Kirkpatrick H.A."/>
            <person name="Posfai G."/>
            <person name="Hackett J."/>
            <person name="Klink S."/>
            <person name="Boutin A."/>
            <person name="Shao Y."/>
            <person name="Miller L."/>
            <person name="Grotbeck E.J."/>
            <person name="Davis N.W."/>
            <person name="Lim A."/>
            <person name="Dimalanta E.T."/>
            <person name="Potamousis K."/>
            <person name="Apodaca J."/>
            <person name="Anantharaman T.S."/>
            <person name="Lin J."/>
            <person name="Yen G."/>
            <person name="Schwartz D.C."/>
            <person name="Welch R.A."/>
            <person name="Blattner F.R."/>
        </authorList>
    </citation>
    <scope>NUCLEOTIDE SEQUENCE [LARGE SCALE GENOMIC DNA]</scope>
    <source>
        <strain>O157:H7 / EDL933 / ATCC 700927 / EHEC</strain>
    </source>
</reference>
<reference key="2">
    <citation type="journal article" date="2001" name="DNA Res.">
        <title>Complete genome sequence of enterohemorrhagic Escherichia coli O157:H7 and genomic comparison with a laboratory strain K-12.</title>
        <authorList>
            <person name="Hayashi T."/>
            <person name="Makino K."/>
            <person name="Ohnishi M."/>
            <person name="Kurokawa K."/>
            <person name="Ishii K."/>
            <person name="Yokoyama K."/>
            <person name="Han C.-G."/>
            <person name="Ohtsubo E."/>
            <person name="Nakayama K."/>
            <person name="Murata T."/>
            <person name="Tanaka M."/>
            <person name="Tobe T."/>
            <person name="Iida T."/>
            <person name="Takami H."/>
            <person name="Honda T."/>
            <person name="Sasakawa C."/>
            <person name="Ogasawara N."/>
            <person name="Yasunaga T."/>
            <person name="Kuhara S."/>
            <person name="Shiba T."/>
            <person name="Hattori M."/>
            <person name="Shinagawa H."/>
        </authorList>
    </citation>
    <scope>NUCLEOTIDE SEQUENCE [LARGE SCALE GENOMIC DNA]</scope>
    <source>
        <strain>O157:H7 / Sakai / RIMD 0509952 / EHEC</strain>
    </source>
</reference>
<accession>P0A8G2</accession>
<accession>P07028</accession>
<accession>P76311</accession>
<accession>Q8XBD5</accession>
<name>UVRC_ECO57</name>
<evidence type="ECO:0000250" key="1"/>
<evidence type="ECO:0000305" key="2"/>
<keyword id="KW-0963">Cytoplasm</keyword>
<keyword id="KW-0227">DNA damage</keyword>
<keyword id="KW-0228">DNA excision</keyword>
<keyword id="KW-0234">DNA repair</keyword>
<keyword id="KW-0267">Excision nuclease</keyword>
<keyword id="KW-1185">Reference proteome</keyword>
<keyword id="KW-0742">SOS response</keyword>